<protein>
    <recommendedName>
        <fullName evidence="1">Peptidyl-tRNA hydrolase</fullName>
        <shortName evidence="1">Pth</shortName>
        <ecNumber evidence="1">3.1.1.29</ecNumber>
    </recommendedName>
</protein>
<comment type="function">
    <text evidence="1">Hydrolyzes ribosome-free peptidyl-tRNAs (with 1 or more amino acids incorporated), which drop off the ribosome during protein synthesis, or as a result of ribosome stalling.</text>
</comment>
<comment type="function">
    <text evidence="1">Catalyzes the release of premature peptidyl moieties from peptidyl-tRNA molecules trapped in stalled 50S ribosomal subunits, and thus maintains levels of free tRNAs and 50S ribosomes.</text>
</comment>
<comment type="catalytic activity">
    <reaction evidence="1">
        <text>an N-acyl-L-alpha-aminoacyl-tRNA + H2O = an N-acyl-L-amino acid + a tRNA + H(+)</text>
        <dbReference type="Rhea" id="RHEA:54448"/>
        <dbReference type="Rhea" id="RHEA-COMP:10123"/>
        <dbReference type="Rhea" id="RHEA-COMP:13883"/>
        <dbReference type="ChEBI" id="CHEBI:15377"/>
        <dbReference type="ChEBI" id="CHEBI:15378"/>
        <dbReference type="ChEBI" id="CHEBI:59874"/>
        <dbReference type="ChEBI" id="CHEBI:78442"/>
        <dbReference type="ChEBI" id="CHEBI:138191"/>
        <dbReference type="EC" id="3.1.1.29"/>
    </reaction>
</comment>
<comment type="subunit">
    <text evidence="1">Monomer.</text>
</comment>
<comment type="subcellular location">
    <subcellularLocation>
        <location evidence="1">Cytoplasm</location>
    </subcellularLocation>
</comment>
<comment type="similarity">
    <text evidence="1">Belongs to the PTH family.</text>
</comment>
<accession>A5FZ48</accession>
<evidence type="ECO:0000255" key="1">
    <source>
        <dbReference type="HAMAP-Rule" id="MF_00083"/>
    </source>
</evidence>
<gene>
    <name evidence="1" type="primary">pth</name>
    <name type="ordered locus">Acry_1675</name>
</gene>
<proteinExistence type="inferred from homology"/>
<reference key="1">
    <citation type="submission" date="2007-05" db="EMBL/GenBank/DDBJ databases">
        <title>Complete sequence of chromosome of Acidiphilium cryptum JF-5.</title>
        <authorList>
            <consortium name="US DOE Joint Genome Institute"/>
            <person name="Copeland A."/>
            <person name="Lucas S."/>
            <person name="Lapidus A."/>
            <person name="Barry K."/>
            <person name="Detter J.C."/>
            <person name="Glavina del Rio T."/>
            <person name="Hammon N."/>
            <person name="Israni S."/>
            <person name="Dalin E."/>
            <person name="Tice H."/>
            <person name="Pitluck S."/>
            <person name="Sims D."/>
            <person name="Brettin T."/>
            <person name="Bruce D."/>
            <person name="Han C."/>
            <person name="Schmutz J."/>
            <person name="Larimer F."/>
            <person name="Land M."/>
            <person name="Hauser L."/>
            <person name="Kyrpides N."/>
            <person name="Kim E."/>
            <person name="Magnuson T."/>
            <person name="Richardson P."/>
        </authorList>
    </citation>
    <scope>NUCLEOTIDE SEQUENCE [LARGE SCALE GENOMIC DNA]</scope>
    <source>
        <strain>JF-5</strain>
    </source>
</reference>
<sequence>MKLWVGLGNPEPGMARNRHNIGFMAIDVIADRHGFAPWRKRFSGLVSEGSVGGEKIVALKPLTYMNESGRAVQPASAFFKLPPDAVTVFHDELDLIPGKVRVKRGGGAAGHNGLRSIDRTLGTQDYWRVRLGIGHPGDKARVHGHVLGNFAKTDEDWLVDTLEAVSDAAPLLAAGKPEDFMTKVALLTKDTA</sequence>
<dbReference type="EC" id="3.1.1.29" evidence="1"/>
<dbReference type="EMBL" id="CP000697">
    <property type="protein sequence ID" value="ABQ30880.1"/>
    <property type="molecule type" value="Genomic_DNA"/>
</dbReference>
<dbReference type="RefSeq" id="WP_011942412.1">
    <property type="nucleotide sequence ID" value="NC_009484.1"/>
</dbReference>
<dbReference type="SMR" id="A5FZ48"/>
<dbReference type="STRING" id="349163.Acry_1675"/>
<dbReference type="KEGG" id="acr:Acry_1675"/>
<dbReference type="eggNOG" id="COG0193">
    <property type="taxonomic scope" value="Bacteria"/>
</dbReference>
<dbReference type="HOGENOM" id="CLU_062456_1_0_5"/>
<dbReference type="Proteomes" id="UP000000245">
    <property type="component" value="Chromosome"/>
</dbReference>
<dbReference type="GO" id="GO:0005737">
    <property type="term" value="C:cytoplasm"/>
    <property type="evidence" value="ECO:0007669"/>
    <property type="project" value="UniProtKB-SubCell"/>
</dbReference>
<dbReference type="GO" id="GO:0004045">
    <property type="term" value="F:peptidyl-tRNA hydrolase activity"/>
    <property type="evidence" value="ECO:0007669"/>
    <property type="project" value="UniProtKB-UniRule"/>
</dbReference>
<dbReference type="GO" id="GO:0000049">
    <property type="term" value="F:tRNA binding"/>
    <property type="evidence" value="ECO:0007669"/>
    <property type="project" value="UniProtKB-UniRule"/>
</dbReference>
<dbReference type="GO" id="GO:0006515">
    <property type="term" value="P:protein quality control for misfolded or incompletely synthesized proteins"/>
    <property type="evidence" value="ECO:0007669"/>
    <property type="project" value="UniProtKB-UniRule"/>
</dbReference>
<dbReference type="GO" id="GO:0072344">
    <property type="term" value="P:rescue of stalled ribosome"/>
    <property type="evidence" value="ECO:0007669"/>
    <property type="project" value="UniProtKB-UniRule"/>
</dbReference>
<dbReference type="CDD" id="cd00462">
    <property type="entry name" value="PTH"/>
    <property type="match status" value="1"/>
</dbReference>
<dbReference type="FunFam" id="3.40.50.1470:FF:000001">
    <property type="entry name" value="Peptidyl-tRNA hydrolase"/>
    <property type="match status" value="1"/>
</dbReference>
<dbReference type="Gene3D" id="3.40.50.1470">
    <property type="entry name" value="Peptidyl-tRNA hydrolase"/>
    <property type="match status" value="1"/>
</dbReference>
<dbReference type="HAMAP" id="MF_00083">
    <property type="entry name" value="Pept_tRNA_hydro_bact"/>
    <property type="match status" value="1"/>
</dbReference>
<dbReference type="InterPro" id="IPR001328">
    <property type="entry name" value="Pept_tRNA_hydro"/>
</dbReference>
<dbReference type="InterPro" id="IPR018171">
    <property type="entry name" value="Pept_tRNA_hydro_CS"/>
</dbReference>
<dbReference type="InterPro" id="IPR036416">
    <property type="entry name" value="Pept_tRNA_hydro_sf"/>
</dbReference>
<dbReference type="NCBIfam" id="TIGR00447">
    <property type="entry name" value="pth"/>
    <property type="match status" value="1"/>
</dbReference>
<dbReference type="PANTHER" id="PTHR17224">
    <property type="entry name" value="PEPTIDYL-TRNA HYDROLASE"/>
    <property type="match status" value="1"/>
</dbReference>
<dbReference type="PANTHER" id="PTHR17224:SF1">
    <property type="entry name" value="PEPTIDYL-TRNA HYDROLASE"/>
    <property type="match status" value="1"/>
</dbReference>
<dbReference type="Pfam" id="PF01195">
    <property type="entry name" value="Pept_tRNA_hydro"/>
    <property type="match status" value="1"/>
</dbReference>
<dbReference type="SUPFAM" id="SSF53178">
    <property type="entry name" value="Peptidyl-tRNA hydrolase-like"/>
    <property type="match status" value="1"/>
</dbReference>
<dbReference type="PROSITE" id="PS01196">
    <property type="entry name" value="PEPT_TRNA_HYDROL_2"/>
    <property type="match status" value="1"/>
</dbReference>
<organism>
    <name type="scientific">Acidiphilium cryptum (strain JF-5)</name>
    <dbReference type="NCBI Taxonomy" id="349163"/>
    <lineage>
        <taxon>Bacteria</taxon>
        <taxon>Pseudomonadati</taxon>
        <taxon>Pseudomonadota</taxon>
        <taxon>Alphaproteobacteria</taxon>
        <taxon>Acetobacterales</taxon>
        <taxon>Acidocellaceae</taxon>
        <taxon>Acidiphilium</taxon>
    </lineage>
</organism>
<keyword id="KW-0963">Cytoplasm</keyword>
<keyword id="KW-0378">Hydrolase</keyword>
<keyword id="KW-1185">Reference proteome</keyword>
<keyword id="KW-0694">RNA-binding</keyword>
<keyword id="KW-0820">tRNA-binding</keyword>
<feature type="chain" id="PRO_1000010554" description="Peptidyl-tRNA hydrolase">
    <location>
        <begin position="1"/>
        <end position="192"/>
    </location>
</feature>
<feature type="active site" description="Proton acceptor" evidence="1">
    <location>
        <position position="19"/>
    </location>
</feature>
<feature type="binding site" evidence="1">
    <location>
        <position position="64"/>
    </location>
    <ligand>
        <name>tRNA</name>
        <dbReference type="ChEBI" id="CHEBI:17843"/>
    </ligand>
</feature>
<feature type="binding site" evidence="1">
    <location>
        <position position="66"/>
    </location>
    <ligand>
        <name>tRNA</name>
        <dbReference type="ChEBI" id="CHEBI:17843"/>
    </ligand>
</feature>
<feature type="binding site" evidence="1">
    <location>
        <position position="112"/>
    </location>
    <ligand>
        <name>tRNA</name>
        <dbReference type="ChEBI" id="CHEBI:17843"/>
    </ligand>
</feature>
<feature type="site" description="Discriminates between blocked and unblocked aminoacyl-tRNA" evidence="1">
    <location>
        <position position="9"/>
    </location>
</feature>
<feature type="site" description="Stabilizes the basic form of H active site to accept a proton" evidence="1">
    <location>
        <position position="91"/>
    </location>
</feature>
<name>PTH_ACICJ</name>